<dbReference type="EMBL" id="AB015475">
    <property type="protein sequence ID" value="BAB08363.1"/>
    <property type="status" value="ALT_SEQ"/>
    <property type="molecule type" value="Genomic_DNA"/>
</dbReference>
<dbReference type="EMBL" id="CP002688">
    <property type="protein sequence ID" value="AED97254.1"/>
    <property type="molecule type" value="Genomic_DNA"/>
</dbReference>
<dbReference type="EMBL" id="AY136433">
    <property type="protein sequence ID" value="AAM97099.1"/>
    <property type="molecule type" value="mRNA"/>
</dbReference>
<dbReference type="EMBL" id="BT000217">
    <property type="protein sequence ID" value="AAN15536.1"/>
    <property type="molecule type" value="mRNA"/>
</dbReference>
<dbReference type="EMBL" id="AY086704">
    <property type="protein sequence ID" value="AAM63758.1"/>
    <property type="molecule type" value="mRNA"/>
</dbReference>
<dbReference type="RefSeq" id="NP_851229.1">
    <molecule id="Q8L773-1"/>
    <property type="nucleotide sequence ID" value="NM_180898.3"/>
</dbReference>
<dbReference type="SMR" id="Q8L773"/>
<dbReference type="BioGRID" id="21361">
    <property type="interactions" value="3"/>
</dbReference>
<dbReference type="FunCoup" id="Q8L773">
    <property type="interactions" value="4106"/>
</dbReference>
<dbReference type="STRING" id="3702.Q8L773"/>
<dbReference type="iPTMnet" id="Q8L773"/>
<dbReference type="MetOSite" id="Q8L773"/>
<dbReference type="PaxDb" id="3702-AT5G59950.5"/>
<dbReference type="EnsemblPlants" id="AT5G59950.1">
    <molecule id="Q8L773-1"/>
    <property type="protein sequence ID" value="AT5G59950.1"/>
    <property type="gene ID" value="AT5G59950"/>
</dbReference>
<dbReference type="GeneID" id="836117"/>
<dbReference type="Gramene" id="AT5G59950.1">
    <molecule id="Q8L773-1"/>
    <property type="protein sequence ID" value="AT5G59950.1"/>
    <property type="gene ID" value="AT5G59950"/>
</dbReference>
<dbReference type="KEGG" id="ath:AT5G59950"/>
<dbReference type="Araport" id="AT5G59950"/>
<dbReference type="TAIR" id="AT5G59950">
    <property type="gene designation" value="ALY1"/>
</dbReference>
<dbReference type="eggNOG" id="KOG0533">
    <property type="taxonomic scope" value="Eukaryota"/>
</dbReference>
<dbReference type="InParanoid" id="Q8L773"/>
<dbReference type="OrthoDB" id="1049195at2759"/>
<dbReference type="PhylomeDB" id="Q8L773"/>
<dbReference type="PRO" id="PR:Q8L773"/>
<dbReference type="Proteomes" id="UP000006548">
    <property type="component" value="Chromosome 5"/>
</dbReference>
<dbReference type="ExpressionAtlas" id="Q8L773">
    <property type="expression patterns" value="baseline and differential"/>
</dbReference>
<dbReference type="GO" id="GO:0005730">
    <property type="term" value="C:nucleolus"/>
    <property type="evidence" value="ECO:0000314"/>
    <property type="project" value="UniProtKB"/>
</dbReference>
<dbReference type="GO" id="GO:0005654">
    <property type="term" value="C:nucleoplasm"/>
    <property type="evidence" value="ECO:0000314"/>
    <property type="project" value="UniProtKB"/>
</dbReference>
<dbReference type="GO" id="GO:0003723">
    <property type="term" value="F:RNA binding"/>
    <property type="evidence" value="ECO:0007669"/>
    <property type="project" value="UniProtKB-KW"/>
</dbReference>
<dbReference type="GO" id="GO:0051028">
    <property type="term" value="P:mRNA transport"/>
    <property type="evidence" value="ECO:0007669"/>
    <property type="project" value="UniProtKB-KW"/>
</dbReference>
<dbReference type="CDD" id="cd12680">
    <property type="entry name" value="RRM_THOC4"/>
    <property type="match status" value="1"/>
</dbReference>
<dbReference type="FunFam" id="3.30.70.330:FF:001089">
    <property type="entry name" value="RNA-binding (RRM/RBD/RNP motifs) family protein"/>
    <property type="match status" value="1"/>
</dbReference>
<dbReference type="Gene3D" id="3.30.70.330">
    <property type="match status" value="1"/>
</dbReference>
<dbReference type="InterPro" id="IPR051229">
    <property type="entry name" value="ALYREF_mRNA_export"/>
</dbReference>
<dbReference type="InterPro" id="IPR025715">
    <property type="entry name" value="FoP_C"/>
</dbReference>
<dbReference type="InterPro" id="IPR012677">
    <property type="entry name" value="Nucleotide-bd_a/b_plait_sf"/>
</dbReference>
<dbReference type="InterPro" id="IPR035979">
    <property type="entry name" value="RBD_domain_sf"/>
</dbReference>
<dbReference type="InterPro" id="IPR000504">
    <property type="entry name" value="RRM_dom"/>
</dbReference>
<dbReference type="PANTHER" id="PTHR19965">
    <property type="entry name" value="RNA AND EXPORT FACTOR BINDING PROTEIN"/>
    <property type="match status" value="1"/>
</dbReference>
<dbReference type="PANTHER" id="PTHR19965:SF72">
    <property type="entry name" value="THO COMPLEX SUBUNIT 4A"/>
    <property type="match status" value="1"/>
</dbReference>
<dbReference type="Pfam" id="PF13865">
    <property type="entry name" value="FoP_duplication"/>
    <property type="match status" value="1"/>
</dbReference>
<dbReference type="Pfam" id="PF00076">
    <property type="entry name" value="RRM_1"/>
    <property type="match status" value="1"/>
</dbReference>
<dbReference type="SMART" id="SM01218">
    <property type="entry name" value="FoP_duplication"/>
    <property type="match status" value="1"/>
</dbReference>
<dbReference type="SMART" id="SM00360">
    <property type="entry name" value="RRM"/>
    <property type="match status" value="1"/>
</dbReference>
<dbReference type="SUPFAM" id="SSF54928">
    <property type="entry name" value="RNA-binding domain, RBD"/>
    <property type="match status" value="1"/>
</dbReference>
<dbReference type="PROSITE" id="PS50102">
    <property type="entry name" value="RRM"/>
    <property type="match status" value="1"/>
</dbReference>
<comment type="function">
    <text evidence="1">Export adapter involved in nuclear export of spliced and unspliced mRNA.</text>
</comment>
<comment type="subcellular location">
    <subcellularLocation>
        <location evidence="4">Nucleus</location>
        <location evidence="4">Nucleoplasm</location>
    </subcellularLocation>
    <subcellularLocation>
        <location evidence="4">Nucleus</location>
        <location evidence="4">Nucleolus</location>
    </subcellularLocation>
</comment>
<comment type="alternative products">
    <event type="alternative splicing"/>
    <isoform>
        <id>Q8L773-1</id>
        <name>1</name>
        <sequence type="displayed"/>
    </isoform>
    <text>A number of isoforms are produced. According to EST sequences.</text>
</comment>
<comment type="similarity">
    <text evidence="5">Belongs to the ALYREF family.</text>
</comment>
<comment type="sequence caution" evidence="5">
    <conflict type="erroneous gene model prediction">
        <sequence resource="EMBL-CDS" id="BAB08363"/>
    </conflict>
</comment>
<keyword id="KW-0007">Acetylation</keyword>
<keyword id="KW-0025">Alternative splicing</keyword>
<keyword id="KW-0509">mRNA transport</keyword>
<keyword id="KW-0539">Nucleus</keyword>
<keyword id="KW-1185">Reference proteome</keyword>
<keyword id="KW-0694">RNA-binding</keyword>
<keyword id="KW-0813">Transport</keyword>
<reference key="1">
    <citation type="journal article" date="1998" name="DNA Res.">
        <title>Structural analysis of Arabidopsis thaliana chromosome 5. VII. Sequence features of the regions of 1,013,767 bp covered by sixteen physically assigned P1 and TAC clones.</title>
        <authorList>
            <person name="Nakamura Y."/>
            <person name="Sato S."/>
            <person name="Asamizu E."/>
            <person name="Kaneko T."/>
            <person name="Kotani H."/>
            <person name="Miyajima N."/>
            <person name="Tabata S."/>
        </authorList>
    </citation>
    <scope>NUCLEOTIDE SEQUENCE [LARGE SCALE GENOMIC DNA]</scope>
    <source>
        <strain>cv. Columbia</strain>
    </source>
</reference>
<reference key="2">
    <citation type="journal article" date="2017" name="Plant J.">
        <title>Araport11: a complete reannotation of the Arabidopsis thaliana reference genome.</title>
        <authorList>
            <person name="Cheng C.Y."/>
            <person name="Krishnakumar V."/>
            <person name="Chan A.P."/>
            <person name="Thibaud-Nissen F."/>
            <person name="Schobel S."/>
            <person name="Town C.D."/>
        </authorList>
    </citation>
    <scope>GENOME REANNOTATION</scope>
    <source>
        <strain>cv. Columbia</strain>
    </source>
</reference>
<reference key="3">
    <citation type="journal article" date="2003" name="Science">
        <title>Empirical analysis of transcriptional activity in the Arabidopsis genome.</title>
        <authorList>
            <person name="Yamada K."/>
            <person name="Lim J."/>
            <person name="Dale J.M."/>
            <person name="Chen H."/>
            <person name="Shinn P."/>
            <person name="Palm C.J."/>
            <person name="Southwick A.M."/>
            <person name="Wu H.C."/>
            <person name="Kim C.J."/>
            <person name="Nguyen M."/>
            <person name="Pham P.K."/>
            <person name="Cheuk R.F."/>
            <person name="Karlin-Newmann G."/>
            <person name="Liu S.X."/>
            <person name="Lam B."/>
            <person name="Sakano H."/>
            <person name="Wu T."/>
            <person name="Yu G."/>
            <person name="Miranda M."/>
            <person name="Quach H.L."/>
            <person name="Tripp M."/>
            <person name="Chang C.H."/>
            <person name="Lee J.M."/>
            <person name="Toriumi M.J."/>
            <person name="Chan M.M."/>
            <person name="Tang C.C."/>
            <person name="Onodera C.S."/>
            <person name="Deng J.M."/>
            <person name="Akiyama K."/>
            <person name="Ansari Y."/>
            <person name="Arakawa T."/>
            <person name="Banh J."/>
            <person name="Banno F."/>
            <person name="Bowser L."/>
            <person name="Brooks S.Y."/>
            <person name="Carninci P."/>
            <person name="Chao Q."/>
            <person name="Choy N."/>
            <person name="Enju A."/>
            <person name="Goldsmith A.D."/>
            <person name="Gurjal M."/>
            <person name="Hansen N.F."/>
            <person name="Hayashizaki Y."/>
            <person name="Johnson-Hopson C."/>
            <person name="Hsuan V.W."/>
            <person name="Iida K."/>
            <person name="Karnes M."/>
            <person name="Khan S."/>
            <person name="Koesema E."/>
            <person name="Ishida J."/>
            <person name="Jiang P.X."/>
            <person name="Jones T."/>
            <person name="Kawai J."/>
            <person name="Kamiya A."/>
            <person name="Meyers C."/>
            <person name="Nakajima M."/>
            <person name="Narusaka M."/>
            <person name="Seki M."/>
            <person name="Sakurai T."/>
            <person name="Satou M."/>
            <person name="Tamse R."/>
            <person name="Vaysberg M."/>
            <person name="Wallender E.K."/>
            <person name="Wong C."/>
            <person name="Yamamura Y."/>
            <person name="Yuan S."/>
            <person name="Shinozaki K."/>
            <person name="Davis R.W."/>
            <person name="Theologis A."/>
            <person name="Ecker J.R."/>
        </authorList>
    </citation>
    <scope>NUCLEOTIDE SEQUENCE [LARGE SCALE MRNA]</scope>
    <source>
        <strain>cv. Columbia</strain>
    </source>
</reference>
<reference key="4">
    <citation type="submission" date="2002-03" db="EMBL/GenBank/DDBJ databases">
        <title>Full-length cDNA from Arabidopsis thaliana.</title>
        <authorList>
            <person name="Brover V.V."/>
            <person name="Troukhan M.E."/>
            <person name="Alexandrov N.A."/>
            <person name="Lu Y.-P."/>
            <person name="Flavell R.B."/>
            <person name="Feldmann K.A."/>
        </authorList>
    </citation>
    <scope>NUCLEOTIDE SEQUENCE [LARGE SCALE MRNA]</scope>
</reference>
<reference key="5">
    <citation type="journal article" date="2004" name="Plant Physiol.">
        <title>Relocalization of nuclear ALY proteins to the cytoplasm by the tomato bushy stunt virus P19 pathogenicity protein.</title>
        <authorList>
            <person name="Uhrig J.F."/>
            <person name="Canto T."/>
            <person name="Marshall D."/>
            <person name="MacFarlane S.A."/>
        </authorList>
    </citation>
    <scope>SUBCELLULAR LOCATION</scope>
</reference>
<reference key="6">
    <citation type="journal article" date="2012" name="Mol. Cell. Proteomics">
        <title>Comparative large-scale characterisation of plant vs. mammal proteins reveals similar and idiosyncratic N-alpha acetylation features.</title>
        <authorList>
            <person name="Bienvenut W.V."/>
            <person name="Sumpton D."/>
            <person name="Martinez A."/>
            <person name="Lilla S."/>
            <person name="Espagne C."/>
            <person name="Meinnel T."/>
            <person name="Giglione C."/>
        </authorList>
    </citation>
    <scope>ACETYLATION [LARGE SCALE ANALYSIS] AT SER-2</scope>
    <scope>CLEAVAGE OF INITIATOR METHIONINE [LARGE SCALE ANALYSIS]</scope>
    <scope>IDENTIFICATION BY MASS SPECTROMETRY [LARGE SCALE ANALYSIS]</scope>
</reference>
<protein>
    <recommendedName>
        <fullName>THO complex subunit 4A</fullName>
    </recommendedName>
    <alternativeName>
        <fullName>ALYREF homolog 1</fullName>
        <shortName>AtALY1</shortName>
    </alternativeName>
</protein>
<sequence>MSTGLDMSLDDMIAKNRKSRGGAGPARGTGSGSGPGPTRRNNPNRKSTRSAPYQSAKAPESTWGHDMFSDRSEDHRSGRSSAGIETGTKLYISNLDYGVMNEDIKELFAEVGELKRYTVHFDRSGRSKGTAEVVYSRRGDALAAVKKYNDVQLDGKPMKIEIVGTNLQTAAAPSGRPANGNSNGAPWRGGQGRGGQQRGGGRGGGGRGGGGRGRRPGKGPAEKISAEDLDADLDKYHSGDMETN</sequence>
<evidence type="ECO:0000250" key="1"/>
<evidence type="ECO:0000255" key="2">
    <source>
        <dbReference type="PROSITE-ProRule" id="PRU00176"/>
    </source>
</evidence>
<evidence type="ECO:0000256" key="3">
    <source>
        <dbReference type="SAM" id="MobiDB-lite"/>
    </source>
</evidence>
<evidence type="ECO:0000269" key="4">
    <source>
    </source>
</evidence>
<evidence type="ECO:0000305" key="5"/>
<evidence type="ECO:0007744" key="6">
    <source>
    </source>
</evidence>
<accession>Q8L773</accession>
<accession>Q8LCA6</accession>
<accession>Q9FJE1</accession>
<feature type="initiator methionine" description="Removed" evidence="6">
    <location>
        <position position="1"/>
    </location>
</feature>
<feature type="chain" id="PRO_0000425585" description="THO complex subunit 4A">
    <location>
        <begin position="2"/>
        <end position="244"/>
    </location>
</feature>
<feature type="domain" description="RRM" evidence="2">
    <location>
        <begin position="88"/>
        <end position="165"/>
    </location>
</feature>
<feature type="region of interest" description="Disordered" evidence="3">
    <location>
        <begin position="1"/>
        <end position="82"/>
    </location>
</feature>
<feature type="region of interest" description="Disordered" evidence="3">
    <location>
        <begin position="169"/>
        <end position="244"/>
    </location>
</feature>
<feature type="compositionally biased region" description="Gly residues" evidence="3">
    <location>
        <begin position="21"/>
        <end position="35"/>
    </location>
</feature>
<feature type="compositionally biased region" description="Basic and acidic residues" evidence="3">
    <location>
        <begin position="67"/>
        <end position="77"/>
    </location>
</feature>
<feature type="compositionally biased region" description="Gly residues" evidence="3">
    <location>
        <begin position="187"/>
        <end position="211"/>
    </location>
</feature>
<feature type="compositionally biased region" description="Basic and acidic residues" evidence="3">
    <location>
        <begin position="220"/>
        <end position="244"/>
    </location>
</feature>
<feature type="modified residue" description="N-acetylserine" evidence="6">
    <location>
        <position position="2"/>
    </location>
</feature>
<feature type="sequence conflict" description="In Ref. 4; AAM63758." evidence="5" ref="4">
    <location>
        <position position="197"/>
    </location>
</feature>
<proteinExistence type="evidence at protein level"/>
<name>THO4A_ARATH</name>
<organism>
    <name type="scientific">Arabidopsis thaliana</name>
    <name type="common">Mouse-ear cress</name>
    <dbReference type="NCBI Taxonomy" id="3702"/>
    <lineage>
        <taxon>Eukaryota</taxon>
        <taxon>Viridiplantae</taxon>
        <taxon>Streptophyta</taxon>
        <taxon>Embryophyta</taxon>
        <taxon>Tracheophyta</taxon>
        <taxon>Spermatophyta</taxon>
        <taxon>Magnoliopsida</taxon>
        <taxon>eudicotyledons</taxon>
        <taxon>Gunneridae</taxon>
        <taxon>Pentapetalae</taxon>
        <taxon>rosids</taxon>
        <taxon>malvids</taxon>
        <taxon>Brassicales</taxon>
        <taxon>Brassicaceae</taxon>
        <taxon>Camelineae</taxon>
        <taxon>Arabidopsis</taxon>
    </lineage>
</organism>
<gene>
    <name type="primary">ALY1</name>
    <name type="synonym">THO4A</name>
    <name type="ordered locus">At5g59950</name>
    <name type="ORF">MMN10.26</name>
</gene>